<keyword id="KW-0963">Cytoplasm</keyword>
<keyword id="KW-0227">DNA damage</keyword>
<keyword id="KW-0228">DNA excision</keyword>
<keyword id="KW-0234">DNA repair</keyword>
<keyword id="KW-0267">Excision nuclease</keyword>
<keyword id="KW-1185">Reference proteome</keyword>
<keyword id="KW-0742">SOS response</keyword>
<name>UVRC_SHIDS</name>
<protein>
    <recommendedName>
        <fullName evidence="1">UvrABC system protein C</fullName>
        <shortName evidence="1">Protein UvrC</shortName>
    </recommendedName>
    <alternativeName>
        <fullName evidence="1">Excinuclease ABC subunit C</fullName>
    </alternativeName>
</protein>
<feature type="chain" id="PRO_0000264949" description="UvrABC system protein C">
    <location>
        <begin position="1"/>
        <end position="575"/>
    </location>
</feature>
<feature type="domain" description="GIY-YIG" evidence="1">
    <location>
        <begin position="16"/>
        <end position="94"/>
    </location>
</feature>
<feature type="domain" description="UVR" evidence="1">
    <location>
        <begin position="204"/>
        <end position="239"/>
    </location>
</feature>
<proteinExistence type="inferred from homology"/>
<dbReference type="EMBL" id="CP000034">
    <property type="protein sequence ID" value="ABB61265.1"/>
    <property type="molecule type" value="Genomic_DNA"/>
</dbReference>
<dbReference type="RefSeq" id="YP_402756.2">
    <property type="nucleotide sequence ID" value="NC_007606.1"/>
</dbReference>
<dbReference type="SMR" id="Q32HE0"/>
<dbReference type="STRING" id="300267.SDY_1105"/>
<dbReference type="EnsemblBacteria" id="ABB61265">
    <property type="protein sequence ID" value="ABB61265"/>
    <property type="gene ID" value="SDY_1105"/>
</dbReference>
<dbReference type="KEGG" id="sdy:SDY_1105"/>
<dbReference type="PATRIC" id="fig|300267.13.peg.1301"/>
<dbReference type="HOGENOM" id="CLU_014841_3_2_6"/>
<dbReference type="Proteomes" id="UP000002716">
    <property type="component" value="Chromosome"/>
</dbReference>
<dbReference type="GO" id="GO:0005737">
    <property type="term" value="C:cytoplasm"/>
    <property type="evidence" value="ECO:0007669"/>
    <property type="project" value="UniProtKB-SubCell"/>
</dbReference>
<dbReference type="GO" id="GO:0009380">
    <property type="term" value="C:excinuclease repair complex"/>
    <property type="evidence" value="ECO:0007669"/>
    <property type="project" value="InterPro"/>
</dbReference>
<dbReference type="GO" id="GO:0003677">
    <property type="term" value="F:DNA binding"/>
    <property type="evidence" value="ECO:0007669"/>
    <property type="project" value="UniProtKB-UniRule"/>
</dbReference>
<dbReference type="GO" id="GO:0009381">
    <property type="term" value="F:excinuclease ABC activity"/>
    <property type="evidence" value="ECO:0007669"/>
    <property type="project" value="UniProtKB-UniRule"/>
</dbReference>
<dbReference type="GO" id="GO:0006289">
    <property type="term" value="P:nucleotide-excision repair"/>
    <property type="evidence" value="ECO:0007669"/>
    <property type="project" value="UniProtKB-UniRule"/>
</dbReference>
<dbReference type="GO" id="GO:0009432">
    <property type="term" value="P:SOS response"/>
    <property type="evidence" value="ECO:0007669"/>
    <property type="project" value="UniProtKB-UniRule"/>
</dbReference>
<dbReference type="CDD" id="cd10434">
    <property type="entry name" value="GIY-YIG_UvrC_Cho"/>
    <property type="match status" value="1"/>
</dbReference>
<dbReference type="FunFam" id="3.30.420.340:FF:000001">
    <property type="entry name" value="UvrABC system protein C"/>
    <property type="match status" value="1"/>
</dbReference>
<dbReference type="FunFam" id="3.40.1440.10:FF:000001">
    <property type="entry name" value="UvrABC system protein C"/>
    <property type="match status" value="1"/>
</dbReference>
<dbReference type="FunFam" id="4.10.860.10:FF:000002">
    <property type="entry name" value="UvrABC system protein C"/>
    <property type="match status" value="1"/>
</dbReference>
<dbReference type="Gene3D" id="3.40.1440.10">
    <property type="entry name" value="GIY-YIG endonuclease"/>
    <property type="match status" value="1"/>
</dbReference>
<dbReference type="Gene3D" id="4.10.860.10">
    <property type="entry name" value="UVR domain"/>
    <property type="match status" value="1"/>
</dbReference>
<dbReference type="Gene3D" id="3.30.420.340">
    <property type="entry name" value="UvrC, RNAse H endonuclease domain"/>
    <property type="match status" value="1"/>
</dbReference>
<dbReference type="HAMAP" id="MF_00203">
    <property type="entry name" value="UvrC"/>
    <property type="match status" value="1"/>
</dbReference>
<dbReference type="InterPro" id="IPR000305">
    <property type="entry name" value="GIY-YIG_endonuc"/>
</dbReference>
<dbReference type="InterPro" id="IPR035901">
    <property type="entry name" value="GIY-YIG_endonuc_sf"/>
</dbReference>
<dbReference type="InterPro" id="IPR047296">
    <property type="entry name" value="GIY-YIG_UvrC_Cho"/>
</dbReference>
<dbReference type="InterPro" id="IPR001943">
    <property type="entry name" value="UVR_dom"/>
</dbReference>
<dbReference type="InterPro" id="IPR036876">
    <property type="entry name" value="UVR_dom_sf"/>
</dbReference>
<dbReference type="InterPro" id="IPR050066">
    <property type="entry name" value="UvrABC_protein_C"/>
</dbReference>
<dbReference type="InterPro" id="IPR004791">
    <property type="entry name" value="UvrC"/>
</dbReference>
<dbReference type="InterPro" id="IPR001162">
    <property type="entry name" value="UvrC_RNase_H_dom"/>
</dbReference>
<dbReference type="InterPro" id="IPR038476">
    <property type="entry name" value="UvrC_RNase_H_dom_sf"/>
</dbReference>
<dbReference type="NCBIfam" id="TIGR00194">
    <property type="entry name" value="uvrC"/>
    <property type="match status" value="1"/>
</dbReference>
<dbReference type="PANTHER" id="PTHR30562:SF1">
    <property type="entry name" value="UVRABC SYSTEM PROTEIN C"/>
    <property type="match status" value="1"/>
</dbReference>
<dbReference type="PANTHER" id="PTHR30562">
    <property type="entry name" value="UVRC/OXIDOREDUCTASE"/>
    <property type="match status" value="1"/>
</dbReference>
<dbReference type="Pfam" id="PF01541">
    <property type="entry name" value="GIY-YIG"/>
    <property type="match status" value="1"/>
</dbReference>
<dbReference type="Pfam" id="PF02151">
    <property type="entry name" value="UVR"/>
    <property type="match status" value="1"/>
</dbReference>
<dbReference type="Pfam" id="PF22920">
    <property type="entry name" value="UvrC_RNaseH"/>
    <property type="match status" value="1"/>
</dbReference>
<dbReference type="Pfam" id="PF08459">
    <property type="entry name" value="UvrC_RNaseH_dom"/>
    <property type="match status" value="1"/>
</dbReference>
<dbReference type="SMART" id="SM00465">
    <property type="entry name" value="GIYc"/>
    <property type="match status" value="1"/>
</dbReference>
<dbReference type="SUPFAM" id="SSF46600">
    <property type="entry name" value="C-terminal UvrC-binding domain of UvrB"/>
    <property type="match status" value="1"/>
</dbReference>
<dbReference type="SUPFAM" id="SSF82771">
    <property type="entry name" value="GIY-YIG endonuclease"/>
    <property type="match status" value="1"/>
</dbReference>
<dbReference type="PROSITE" id="PS50164">
    <property type="entry name" value="GIY_YIG"/>
    <property type="match status" value="1"/>
</dbReference>
<dbReference type="PROSITE" id="PS50151">
    <property type="entry name" value="UVR"/>
    <property type="match status" value="1"/>
</dbReference>
<dbReference type="PROSITE" id="PS50165">
    <property type="entry name" value="UVRC"/>
    <property type="match status" value="1"/>
</dbReference>
<gene>
    <name evidence="1" type="primary">uvrC</name>
    <name type="ordered locus">SDY_1105</name>
</gene>
<organism>
    <name type="scientific">Shigella dysenteriae serotype 1 (strain Sd197)</name>
    <dbReference type="NCBI Taxonomy" id="300267"/>
    <lineage>
        <taxon>Bacteria</taxon>
        <taxon>Pseudomonadati</taxon>
        <taxon>Pseudomonadota</taxon>
        <taxon>Gammaproteobacteria</taxon>
        <taxon>Enterobacterales</taxon>
        <taxon>Enterobacteriaceae</taxon>
        <taxon>Shigella</taxon>
    </lineage>
</organism>
<sequence>MSDQFDAKAFLKTVTSQPGVYRMYDAGGTVIYVGKAKDLKKRLSSYFRSNLASRKTEALVAQIQQIDVTVTHTETEALLLEHNYIKLYQPRYNVLLRDDKSYPFIFLSGDTHPRLAMHRGAKHAKGEYFGPFPNGYAVRETLALLQKIFPIRQCENSVYRNRSRPCLQYQIGRCLGPCVEGLVSEEEYAQQVEYVRLFLSGKDDQVLTQLISRMETASQNLEFEEAARIRDQIQAVRRVTEKQFVSNTGDDLDVIGVAFDAGMACVHVLFIRQGKVLGSRSYFPKVPGGTELSEVVETFVGQFYLQGSQMRTLPGEILLDFNLSDKTLLADSLSELAGRKINVQTKPRGDRARYLKLARTNAATALTSKLSQQSTVHQRLTALASVLKLPEVKRMECFDISHTMGEQTVASCVVFDANGPLRAEYRRYNITGITPGDDYAAMNQVLRRRYGKAIDDSKIPDVILIDGGKGQLAQAKNVFAELDVSWDKNHPLLLGVAKGADRKAGLETLFFEPEGEGFSLPPDSPALHVIQHIRDESHDHAIGGHRKKRAKVKNTSSLETIEGVGPKRRQNVVEN</sequence>
<reference key="1">
    <citation type="journal article" date="2005" name="Nucleic Acids Res.">
        <title>Genome dynamics and diversity of Shigella species, the etiologic agents of bacillary dysentery.</title>
        <authorList>
            <person name="Yang F."/>
            <person name="Yang J."/>
            <person name="Zhang X."/>
            <person name="Chen L."/>
            <person name="Jiang Y."/>
            <person name="Yan Y."/>
            <person name="Tang X."/>
            <person name="Wang J."/>
            <person name="Xiong Z."/>
            <person name="Dong J."/>
            <person name="Xue Y."/>
            <person name="Zhu Y."/>
            <person name="Xu X."/>
            <person name="Sun L."/>
            <person name="Chen S."/>
            <person name="Nie H."/>
            <person name="Peng J."/>
            <person name="Xu J."/>
            <person name="Wang Y."/>
            <person name="Yuan Z."/>
            <person name="Wen Y."/>
            <person name="Yao Z."/>
            <person name="Shen Y."/>
            <person name="Qiang B."/>
            <person name="Hou Y."/>
            <person name="Yu J."/>
            <person name="Jin Q."/>
        </authorList>
    </citation>
    <scope>NUCLEOTIDE SEQUENCE [LARGE SCALE GENOMIC DNA]</scope>
    <source>
        <strain>Sd197</strain>
    </source>
</reference>
<evidence type="ECO:0000255" key="1">
    <source>
        <dbReference type="HAMAP-Rule" id="MF_00203"/>
    </source>
</evidence>
<accession>Q32HE0</accession>
<comment type="function">
    <text evidence="1">The UvrABC repair system catalyzes the recognition and processing of DNA lesions. UvrC both incises the 5' and 3' sides of the lesion. The N-terminal half is responsible for the 3' incision and the C-terminal half is responsible for the 5' incision.</text>
</comment>
<comment type="subunit">
    <text evidence="1">Interacts with UvrB in an incision complex.</text>
</comment>
<comment type="subcellular location">
    <subcellularLocation>
        <location evidence="1">Cytoplasm</location>
    </subcellularLocation>
</comment>
<comment type="similarity">
    <text evidence="1">Belongs to the UvrC family.</text>
</comment>